<keyword id="KW-0002">3D-structure</keyword>
<keyword id="KW-0903">Direct protein sequencing</keyword>
<keyword id="KW-0408">Iron</keyword>
<keyword id="KW-1185">Reference proteome</keyword>
<keyword id="KW-0346">Stress response</keyword>
<protein>
    <recommendedName>
        <fullName>Probable Fe(2+)-trafficking protein</fullName>
    </recommendedName>
</protein>
<proteinExistence type="evidence at protein level"/>
<evidence type="ECO:0000269" key="1">
    <source>
    </source>
</evidence>
<evidence type="ECO:0000269" key="2">
    <source>
    </source>
</evidence>
<evidence type="ECO:0000269" key="3">
    <source>
    </source>
</evidence>
<evidence type="ECO:0000269" key="4">
    <source>
    </source>
</evidence>
<evidence type="ECO:0000305" key="5"/>
<evidence type="ECO:0007829" key="6">
    <source>
        <dbReference type="PDB" id="1YHD"/>
    </source>
</evidence>
<feature type="initiator methionine" description="Removed" evidence="3 4">
    <location>
        <position position="1"/>
    </location>
</feature>
<feature type="chain" id="PRO_0000214478" description="Probable Fe(2+)-trafficking protein">
    <location>
        <begin position="2"/>
        <end position="91"/>
    </location>
</feature>
<feature type="strand" evidence="6">
    <location>
        <begin position="8"/>
        <end position="10"/>
    </location>
</feature>
<feature type="strand" evidence="6">
    <location>
        <begin position="12"/>
        <end position="14"/>
    </location>
</feature>
<feature type="helix" evidence="6">
    <location>
        <begin position="26"/>
        <end position="33"/>
    </location>
</feature>
<feature type="helix" evidence="6">
    <location>
        <begin position="36"/>
        <end position="52"/>
    </location>
</feature>
<feature type="helix" evidence="6">
    <location>
        <begin position="60"/>
        <end position="73"/>
    </location>
</feature>
<feature type="turn" evidence="6">
    <location>
        <begin position="74"/>
        <end position="78"/>
    </location>
</feature>
<reference key="1">
    <citation type="journal article" date="1997" name="Science">
        <title>The complete genome sequence of Escherichia coli K-12.</title>
        <authorList>
            <person name="Blattner F.R."/>
            <person name="Plunkett G. III"/>
            <person name="Bloch C.A."/>
            <person name="Perna N.T."/>
            <person name="Burland V."/>
            <person name="Riley M."/>
            <person name="Collado-Vides J."/>
            <person name="Glasner J.D."/>
            <person name="Rode C.K."/>
            <person name="Mayhew G.F."/>
            <person name="Gregor J."/>
            <person name="Davis N.W."/>
            <person name="Kirkpatrick H.A."/>
            <person name="Goeden M.A."/>
            <person name="Rose D.J."/>
            <person name="Mau B."/>
            <person name="Shao Y."/>
        </authorList>
    </citation>
    <scope>NUCLEOTIDE SEQUENCE [LARGE SCALE GENOMIC DNA]</scope>
    <source>
        <strain>K12 / MG1655 / ATCC 47076</strain>
    </source>
</reference>
<reference key="2">
    <citation type="journal article" date="2006" name="Mol. Syst. Biol.">
        <title>Highly accurate genome sequences of Escherichia coli K-12 strains MG1655 and W3110.</title>
        <authorList>
            <person name="Hayashi K."/>
            <person name="Morooka N."/>
            <person name="Yamamoto Y."/>
            <person name="Fujita K."/>
            <person name="Isono K."/>
            <person name="Choi S."/>
            <person name="Ohtsubo E."/>
            <person name="Baba T."/>
            <person name="Wanner B.L."/>
            <person name="Mori H."/>
            <person name="Horiuchi T."/>
        </authorList>
    </citation>
    <scope>NUCLEOTIDE SEQUENCE [LARGE SCALE GENOMIC DNA]</scope>
    <source>
        <strain>K12 / W3110 / ATCC 27325 / DSM 5911</strain>
    </source>
</reference>
<reference key="3">
    <citation type="journal article" date="1997" name="Electrophoresis">
        <title>Comparing the predicted and observed properties of proteins encoded in the genome of Escherichia coli K-12.</title>
        <authorList>
            <person name="Link A.J."/>
            <person name="Robison K."/>
            <person name="Church G.M."/>
        </authorList>
    </citation>
    <scope>PROTEIN SEQUENCE OF 2-13</scope>
    <source>
        <strain>K12 / EMG2</strain>
    </source>
</reference>
<reference key="4">
    <citation type="journal article" date="1998" name="FEMS Microbiol. Lett.">
        <title>Small genes/gene-products in Escherichia coli K-12.</title>
        <authorList>
            <person name="Wasinger V.C."/>
            <person name="Humphery-Smith I."/>
        </authorList>
    </citation>
    <scope>PROTEIN SEQUENCE OF 2-11</scope>
    <source>
        <strain>K12</strain>
    </source>
</reference>
<reference key="5">
    <citation type="journal article" date="1999" name="Electrophoresis">
        <title>Enrichment of low abundance proteins of Escherichia coli by hydroxyapatite chromatography.</title>
        <authorList>
            <person name="Fountoulakis M."/>
            <person name="Takacs M.-F."/>
            <person name="Berndt P."/>
            <person name="Langen H."/>
            <person name="Takacs B."/>
        </authorList>
    </citation>
    <scope>IDENTIFICATION BY MASS SPECTROMETRY</scope>
    <source>
        <strain>B / BL21</strain>
    </source>
</reference>
<reference key="6">
    <citation type="journal article" date="2003" name="J. Bacteriol.">
        <title>SoxRS-regulated expression and genetic analysis of the yggX gene of Escherichia coli.</title>
        <authorList>
            <person name="Pomposiello P.J."/>
            <person name="Koutsolioutsou A."/>
            <person name="Carrasco D."/>
            <person name="Demple B."/>
        </authorList>
    </citation>
    <scope>INDUCTION</scope>
    <scope>FUNCTION</scope>
    <source>
        <strain>K12 / GC4468</strain>
    </source>
</reference>
<reference key="7">
    <citation type="journal article" date="2005" name="Protein Sci.">
        <title>The solution structure of the oxidative stress-related protein YggX from Escherichia coli.</title>
        <authorList>
            <person name="Osborne M.J."/>
            <person name="Siddiqui N."/>
            <person name="Landgraf D."/>
            <person name="Pomposiello P.J."/>
            <person name="Gehring K."/>
        </authorList>
    </citation>
    <scope>STRUCTURE BY NMR</scope>
    <scope>FUNCTION</scope>
</reference>
<name>FETP_ECOLI</name>
<accession>P0A8P3</accession>
<accession>P52065</accession>
<accession>Q2M9N1</accession>
<dbReference type="EMBL" id="U28377">
    <property type="protein sequence ID" value="AAA69129.1"/>
    <property type="molecule type" value="Genomic_DNA"/>
</dbReference>
<dbReference type="EMBL" id="U00096">
    <property type="protein sequence ID" value="AAC75999.1"/>
    <property type="molecule type" value="Genomic_DNA"/>
</dbReference>
<dbReference type="EMBL" id="AP009048">
    <property type="protein sequence ID" value="BAE77025.1"/>
    <property type="molecule type" value="Genomic_DNA"/>
</dbReference>
<dbReference type="PIR" id="A65082">
    <property type="entry name" value="A65082"/>
</dbReference>
<dbReference type="RefSeq" id="NP_417437.1">
    <property type="nucleotide sequence ID" value="NC_000913.3"/>
</dbReference>
<dbReference type="RefSeq" id="WP_000091700.1">
    <property type="nucleotide sequence ID" value="NZ_STEB01000001.1"/>
</dbReference>
<dbReference type="PDB" id="1YHD">
    <property type="method" value="NMR"/>
    <property type="chains" value="A=2-91"/>
</dbReference>
<dbReference type="PDBsum" id="1YHD"/>
<dbReference type="SMR" id="P0A8P3"/>
<dbReference type="BioGRID" id="4262360">
    <property type="interactions" value="69"/>
</dbReference>
<dbReference type="BioGRID" id="851780">
    <property type="interactions" value="1"/>
</dbReference>
<dbReference type="FunCoup" id="P0A8P3">
    <property type="interactions" value="115"/>
</dbReference>
<dbReference type="IntAct" id="P0A8P3">
    <property type="interactions" value="3"/>
</dbReference>
<dbReference type="STRING" id="511145.b2962"/>
<dbReference type="jPOST" id="P0A8P3"/>
<dbReference type="PaxDb" id="511145-b2962"/>
<dbReference type="EnsemblBacteria" id="AAC75999">
    <property type="protein sequence ID" value="AAC75999"/>
    <property type="gene ID" value="b2962"/>
</dbReference>
<dbReference type="GeneID" id="947461"/>
<dbReference type="KEGG" id="ecj:JW2929"/>
<dbReference type="KEGG" id="eco:b2962"/>
<dbReference type="KEGG" id="ecoc:C3026_16210"/>
<dbReference type="PATRIC" id="fig|1411691.4.peg.3769"/>
<dbReference type="EchoBASE" id="EB2809"/>
<dbReference type="eggNOG" id="COG2924">
    <property type="taxonomic scope" value="Bacteria"/>
</dbReference>
<dbReference type="HOGENOM" id="CLU_170994_0_0_6"/>
<dbReference type="InParanoid" id="P0A8P3"/>
<dbReference type="OMA" id="NCIKLGR"/>
<dbReference type="OrthoDB" id="9804318at2"/>
<dbReference type="PhylomeDB" id="P0A8P3"/>
<dbReference type="BioCyc" id="EcoCyc:G7532-MONOMER"/>
<dbReference type="EvolutionaryTrace" id="P0A8P3"/>
<dbReference type="PRO" id="PR:P0A8P3"/>
<dbReference type="Proteomes" id="UP000000625">
    <property type="component" value="Chromosome"/>
</dbReference>
<dbReference type="GO" id="GO:0005829">
    <property type="term" value="C:cytosol"/>
    <property type="evidence" value="ECO:0000314"/>
    <property type="project" value="EcoCyc"/>
</dbReference>
<dbReference type="GO" id="GO:0005506">
    <property type="term" value="F:iron ion binding"/>
    <property type="evidence" value="ECO:0007669"/>
    <property type="project" value="UniProtKB-UniRule"/>
</dbReference>
<dbReference type="GO" id="GO:0034599">
    <property type="term" value="P:cellular response to oxidative stress"/>
    <property type="evidence" value="ECO:0000315"/>
    <property type="project" value="EcoCyc"/>
</dbReference>
<dbReference type="FunFam" id="1.10.3880.10:FF:000001">
    <property type="entry name" value="Probable Fe(2+)-trafficking protein"/>
    <property type="match status" value="1"/>
</dbReference>
<dbReference type="Gene3D" id="1.10.3880.10">
    <property type="entry name" value="Fe(II) trafficking protein YggX"/>
    <property type="match status" value="1"/>
</dbReference>
<dbReference type="HAMAP" id="MF_00686">
    <property type="entry name" value="Fe_traffic_YggX"/>
    <property type="match status" value="1"/>
</dbReference>
<dbReference type="InterPro" id="IPR007457">
    <property type="entry name" value="Fe_traffick_prot_YggX"/>
</dbReference>
<dbReference type="InterPro" id="IPR036766">
    <property type="entry name" value="Fe_traffick_prot_YggX_sf"/>
</dbReference>
<dbReference type="NCBIfam" id="NF003817">
    <property type="entry name" value="PRK05408.1"/>
    <property type="match status" value="1"/>
</dbReference>
<dbReference type="PANTHER" id="PTHR36965">
    <property type="entry name" value="FE(2+)-TRAFFICKING PROTEIN-RELATED"/>
    <property type="match status" value="1"/>
</dbReference>
<dbReference type="PANTHER" id="PTHR36965:SF1">
    <property type="entry name" value="FE(2+)-TRAFFICKING PROTEIN-RELATED"/>
    <property type="match status" value="1"/>
</dbReference>
<dbReference type="Pfam" id="PF04362">
    <property type="entry name" value="Iron_traffic"/>
    <property type="match status" value="1"/>
</dbReference>
<dbReference type="PIRSF" id="PIRSF029827">
    <property type="entry name" value="Fe_traffic_YggX"/>
    <property type="match status" value="1"/>
</dbReference>
<dbReference type="SUPFAM" id="SSF111148">
    <property type="entry name" value="YggX-like"/>
    <property type="match status" value="1"/>
</dbReference>
<comment type="function">
    <text evidence="1 2">Could be a mediator in iron transactions between iron acquisition and iron-requiring processes, such as synthesis and/or repair of Fe-S clusters in biosynthetic enzymes. Necessary to maintain high levels of aconitase under oxidative stress.</text>
</comment>
<comment type="subunit">
    <text evidence="5">Monomer.</text>
</comment>
<comment type="induction">
    <text evidence="1">By oxidative stress and SoxS.</text>
</comment>
<comment type="similarity">
    <text evidence="5">Belongs to the Fe(2+)-trafficking protein family.</text>
</comment>
<organism>
    <name type="scientific">Escherichia coli (strain K12)</name>
    <dbReference type="NCBI Taxonomy" id="83333"/>
    <lineage>
        <taxon>Bacteria</taxon>
        <taxon>Pseudomonadati</taxon>
        <taxon>Pseudomonadota</taxon>
        <taxon>Gammaproteobacteria</taxon>
        <taxon>Enterobacterales</taxon>
        <taxon>Enterobacteriaceae</taxon>
        <taxon>Escherichia</taxon>
    </lineage>
</organism>
<sequence>MSRTIFCTFLQREAEGQDFQLYPGELGKRIYNEISKEAWAQWQHKQTMLINEKKLNMMNAEHRKLLEQEMVNFLFEGKEVHIEGYTPEDKK</sequence>
<gene>
    <name type="primary">yggX</name>
    <name type="ordered locus">b2962</name>
    <name type="ordered locus">JW2929</name>
</gene>